<keyword id="KW-0687">Ribonucleoprotein</keyword>
<keyword id="KW-0689">Ribosomal protein</keyword>
<organism>
    <name type="scientific">Colwellia psychrerythraea (strain 34H / ATCC BAA-681)</name>
    <name type="common">Vibrio psychroerythus</name>
    <dbReference type="NCBI Taxonomy" id="167879"/>
    <lineage>
        <taxon>Bacteria</taxon>
        <taxon>Pseudomonadati</taxon>
        <taxon>Pseudomonadota</taxon>
        <taxon>Gammaproteobacteria</taxon>
        <taxon>Alteromonadales</taxon>
        <taxon>Colwelliaceae</taxon>
        <taxon>Colwellia</taxon>
    </lineage>
</organism>
<evidence type="ECO:0000255" key="1">
    <source>
        <dbReference type="HAMAP-Rule" id="MF_00368"/>
    </source>
</evidence>
<evidence type="ECO:0000305" key="2"/>
<dbReference type="EMBL" id="CP000083">
    <property type="protein sequence ID" value="AAZ26101.1"/>
    <property type="molecule type" value="Genomic_DNA"/>
</dbReference>
<dbReference type="RefSeq" id="WP_011045495.1">
    <property type="nucleotide sequence ID" value="NC_003910.7"/>
</dbReference>
<dbReference type="SMR" id="Q47UV8"/>
<dbReference type="STRING" id="167879.CPS_4770"/>
<dbReference type="KEGG" id="cps:CPS_4770"/>
<dbReference type="HOGENOM" id="CLU_086499_3_2_6"/>
<dbReference type="Proteomes" id="UP000000547">
    <property type="component" value="Chromosome"/>
</dbReference>
<dbReference type="GO" id="GO:0022625">
    <property type="term" value="C:cytosolic large ribosomal subunit"/>
    <property type="evidence" value="ECO:0007669"/>
    <property type="project" value="TreeGrafter"/>
</dbReference>
<dbReference type="GO" id="GO:0003729">
    <property type="term" value="F:mRNA binding"/>
    <property type="evidence" value="ECO:0007669"/>
    <property type="project" value="TreeGrafter"/>
</dbReference>
<dbReference type="GO" id="GO:0003735">
    <property type="term" value="F:structural constituent of ribosome"/>
    <property type="evidence" value="ECO:0007669"/>
    <property type="project" value="InterPro"/>
</dbReference>
<dbReference type="GO" id="GO:0006412">
    <property type="term" value="P:translation"/>
    <property type="evidence" value="ECO:0007669"/>
    <property type="project" value="UniProtKB-UniRule"/>
</dbReference>
<dbReference type="CDD" id="cd00387">
    <property type="entry name" value="Ribosomal_L7_L12"/>
    <property type="match status" value="1"/>
</dbReference>
<dbReference type="FunFam" id="3.30.1390.10:FF:000001">
    <property type="entry name" value="50S ribosomal protein L7/L12"/>
    <property type="match status" value="1"/>
</dbReference>
<dbReference type="Gene3D" id="3.30.1390.10">
    <property type="match status" value="1"/>
</dbReference>
<dbReference type="Gene3D" id="1.20.5.710">
    <property type="entry name" value="Single helix bin"/>
    <property type="match status" value="1"/>
</dbReference>
<dbReference type="HAMAP" id="MF_00368">
    <property type="entry name" value="Ribosomal_bL12"/>
    <property type="match status" value="1"/>
</dbReference>
<dbReference type="InterPro" id="IPR000206">
    <property type="entry name" value="Ribosomal_bL12"/>
</dbReference>
<dbReference type="InterPro" id="IPR013823">
    <property type="entry name" value="Ribosomal_bL12_C"/>
</dbReference>
<dbReference type="InterPro" id="IPR014719">
    <property type="entry name" value="Ribosomal_bL12_C/ClpS-like"/>
</dbReference>
<dbReference type="InterPro" id="IPR008932">
    <property type="entry name" value="Ribosomal_bL12_oligo"/>
</dbReference>
<dbReference type="InterPro" id="IPR036235">
    <property type="entry name" value="Ribosomal_bL12_oligo_N_sf"/>
</dbReference>
<dbReference type="NCBIfam" id="TIGR00855">
    <property type="entry name" value="L12"/>
    <property type="match status" value="1"/>
</dbReference>
<dbReference type="PANTHER" id="PTHR45987">
    <property type="entry name" value="39S RIBOSOMAL PROTEIN L12"/>
    <property type="match status" value="1"/>
</dbReference>
<dbReference type="PANTHER" id="PTHR45987:SF4">
    <property type="entry name" value="LARGE RIBOSOMAL SUBUNIT PROTEIN BL12M"/>
    <property type="match status" value="1"/>
</dbReference>
<dbReference type="Pfam" id="PF00542">
    <property type="entry name" value="Ribosomal_L12"/>
    <property type="match status" value="1"/>
</dbReference>
<dbReference type="Pfam" id="PF16320">
    <property type="entry name" value="Ribosomal_L12_N"/>
    <property type="match status" value="1"/>
</dbReference>
<dbReference type="SUPFAM" id="SSF54736">
    <property type="entry name" value="ClpS-like"/>
    <property type="match status" value="1"/>
</dbReference>
<dbReference type="SUPFAM" id="SSF48300">
    <property type="entry name" value="Ribosomal protein L7/12, oligomerisation (N-terminal) domain"/>
    <property type="match status" value="1"/>
</dbReference>
<sequence>MSISKDDILNAVAEMSVMDVVALIEAMEEKFGVSASAAVAAAGPAEAADEQTEFNVVMTSFGEKKVAVIKAVRGATGLGLKEAKDLVESLGVVKEGVEKAEAEELKKTLEEAGASVEIK</sequence>
<accession>Q47UV8</accession>
<name>RL7_COLP3</name>
<gene>
    <name evidence="1" type="primary">rplL</name>
    <name type="ordered locus">CPS_4770</name>
</gene>
<reference key="1">
    <citation type="journal article" date="2005" name="Proc. Natl. Acad. Sci. U.S.A.">
        <title>The psychrophilic lifestyle as revealed by the genome sequence of Colwellia psychrerythraea 34H through genomic and proteomic analyses.</title>
        <authorList>
            <person name="Methe B.A."/>
            <person name="Nelson K.E."/>
            <person name="Deming J.W."/>
            <person name="Momen B."/>
            <person name="Melamud E."/>
            <person name="Zhang X."/>
            <person name="Moult J."/>
            <person name="Madupu R."/>
            <person name="Nelson W.C."/>
            <person name="Dodson R.J."/>
            <person name="Brinkac L.M."/>
            <person name="Daugherty S.C."/>
            <person name="Durkin A.S."/>
            <person name="DeBoy R.T."/>
            <person name="Kolonay J.F."/>
            <person name="Sullivan S.A."/>
            <person name="Zhou L."/>
            <person name="Davidsen T.M."/>
            <person name="Wu M."/>
            <person name="Huston A.L."/>
            <person name="Lewis M."/>
            <person name="Weaver B."/>
            <person name="Weidman J.F."/>
            <person name="Khouri H."/>
            <person name="Utterback T.R."/>
            <person name="Feldblyum T.V."/>
            <person name="Fraser C.M."/>
        </authorList>
    </citation>
    <scope>NUCLEOTIDE SEQUENCE [LARGE SCALE GENOMIC DNA]</scope>
    <source>
        <strain>34H / ATCC BAA-681</strain>
    </source>
</reference>
<comment type="function">
    <text evidence="1">Forms part of the ribosomal stalk which helps the ribosome interact with GTP-bound translation factors. Is thus essential for accurate translation.</text>
</comment>
<comment type="subunit">
    <text evidence="1">Homodimer. Part of the ribosomal stalk of the 50S ribosomal subunit. Forms a multimeric L10(L12)X complex, where L10 forms an elongated spine to which 2 to 4 L12 dimers bind in a sequential fashion. Binds GTP-bound translation factors.</text>
</comment>
<comment type="similarity">
    <text evidence="1">Belongs to the bacterial ribosomal protein bL12 family.</text>
</comment>
<feature type="chain" id="PRO_0000243411" description="Large ribosomal subunit protein bL12">
    <location>
        <begin position="1"/>
        <end position="119"/>
    </location>
</feature>
<proteinExistence type="inferred from homology"/>
<protein>
    <recommendedName>
        <fullName evidence="1">Large ribosomal subunit protein bL12</fullName>
    </recommendedName>
    <alternativeName>
        <fullName evidence="2">50S ribosomal protein L7/L12</fullName>
    </alternativeName>
</protein>